<gene>
    <name evidence="1" type="primary">pheT</name>
    <name type="ordered locus">Noc_1145</name>
</gene>
<evidence type="ECO:0000255" key="1">
    <source>
        <dbReference type="HAMAP-Rule" id="MF_00283"/>
    </source>
</evidence>
<protein>
    <recommendedName>
        <fullName evidence="1">Phenylalanine--tRNA ligase beta subunit</fullName>
        <ecNumber evidence="1">6.1.1.20</ecNumber>
    </recommendedName>
    <alternativeName>
        <fullName evidence="1">Phenylalanyl-tRNA synthetase beta subunit</fullName>
        <shortName evidence="1">PheRS</shortName>
    </alternativeName>
</protein>
<organism>
    <name type="scientific">Nitrosococcus oceani (strain ATCC 19707 / BCRC 17464 / JCM 30415 / NCIMB 11848 / C-107)</name>
    <dbReference type="NCBI Taxonomy" id="323261"/>
    <lineage>
        <taxon>Bacteria</taxon>
        <taxon>Pseudomonadati</taxon>
        <taxon>Pseudomonadota</taxon>
        <taxon>Gammaproteobacteria</taxon>
        <taxon>Chromatiales</taxon>
        <taxon>Chromatiaceae</taxon>
        <taxon>Nitrosococcus</taxon>
    </lineage>
</organism>
<accession>Q3JBZ7</accession>
<name>SYFB_NITOC</name>
<keyword id="KW-0030">Aminoacyl-tRNA synthetase</keyword>
<keyword id="KW-0067">ATP-binding</keyword>
<keyword id="KW-0963">Cytoplasm</keyword>
<keyword id="KW-0436">Ligase</keyword>
<keyword id="KW-0460">Magnesium</keyword>
<keyword id="KW-0479">Metal-binding</keyword>
<keyword id="KW-0547">Nucleotide-binding</keyword>
<keyword id="KW-0648">Protein biosynthesis</keyword>
<keyword id="KW-1185">Reference proteome</keyword>
<keyword id="KW-0694">RNA-binding</keyword>
<keyword id="KW-0820">tRNA-binding</keyword>
<dbReference type="EC" id="6.1.1.20" evidence="1"/>
<dbReference type="EMBL" id="CP000127">
    <property type="protein sequence ID" value="ABA57649.1"/>
    <property type="molecule type" value="Genomic_DNA"/>
</dbReference>
<dbReference type="RefSeq" id="WP_002811524.1">
    <property type="nucleotide sequence ID" value="NC_007484.1"/>
</dbReference>
<dbReference type="SMR" id="Q3JBZ7"/>
<dbReference type="FunCoup" id="Q3JBZ7">
    <property type="interactions" value="490"/>
</dbReference>
<dbReference type="STRING" id="323261.Noc_1145"/>
<dbReference type="KEGG" id="noc:Noc_1145"/>
<dbReference type="eggNOG" id="COG0072">
    <property type="taxonomic scope" value="Bacteria"/>
</dbReference>
<dbReference type="HOGENOM" id="CLU_016891_0_0_6"/>
<dbReference type="InParanoid" id="Q3JBZ7"/>
<dbReference type="Proteomes" id="UP000006838">
    <property type="component" value="Chromosome"/>
</dbReference>
<dbReference type="GO" id="GO:0009328">
    <property type="term" value="C:phenylalanine-tRNA ligase complex"/>
    <property type="evidence" value="ECO:0007669"/>
    <property type="project" value="TreeGrafter"/>
</dbReference>
<dbReference type="GO" id="GO:0005524">
    <property type="term" value="F:ATP binding"/>
    <property type="evidence" value="ECO:0007669"/>
    <property type="project" value="UniProtKB-UniRule"/>
</dbReference>
<dbReference type="GO" id="GO:0000287">
    <property type="term" value="F:magnesium ion binding"/>
    <property type="evidence" value="ECO:0007669"/>
    <property type="project" value="UniProtKB-UniRule"/>
</dbReference>
<dbReference type="GO" id="GO:0004826">
    <property type="term" value="F:phenylalanine-tRNA ligase activity"/>
    <property type="evidence" value="ECO:0007669"/>
    <property type="project" value="UniProtKB-UniRule"/>
</dbReference>
<dbReference type="GO" id="GO:0000049">
    <property type="term" value="F:tRNA binding"/>
    <property type="evidence" value="ECO:0007669"/>
    <property type="project" value="UniProtKB-KW"/>
</dbReference>
<dbReference type="GO" id="GO:0006432">
    <property type="term" value="P:phenylalanyl-tRNA aminoacylation"/>
    <property type="evidence" value="ECO:0007669"/>
    <property type="project" value="UniProtKB-UniRule"/>
</dbReference>
<dbReference type="CDD" id="cd00769">
    <property type="entry name" value="PheRS_beta_core"/>
    <property type="match status" value="1"/>
</dbReference>
<dbReference type="CDD" id="cd02796">
    <property type="entry name" value="tRNA_bind_bactPheRS"/>
    <property type="match status" value="1"/>
</dbReference>
<dbReference type="FunFam" id="2.40.50.140:FF:000045">
    <property type="entry name" value="Phenylalanine--tRNA ligase beta subunit"/>
    <property type="match status" value="1"/>
</dbReference>
<dbReference type="FunFam" id="3.30.56.10:FF:000002">
    <property type="entry name" value="Phenylalanine--tRNA ligase beta subunit"/>
    <property type="match status" value="1"/>
</dbReference>
<dbReference type="FunFam" id="3.30.70.380:FF:000001">
    <property type="entry name" value="Phenylalanine--tRNA ligase beta subunit"/>
    <property type="match status" value="1"/>
</dbReference>
<dbReference type="FunFam" id="3.30.930.10:FF:000022">
    <property type="entry name" value="Phenylalanine--tRNA ligase beta subunit"/>
    <property type="match status" value="1"/>
</dbReference>
<dbReference type="FunFam" id="3.50.40.10:FF:000001">
    <property type="entry name" value="Phenylalanine--tRNA ligase beta subunit"/>
    <property type="match status" value="1"/>
</dbReference>
<dbReference type="Gene3D" id="3.30.56.10">
    <property type="match status" value="2"/>
</dbReference>
<dbReference type="Gene3D" id="3.30.930.10">
    <property type="entry name" value="Bira Bifunctional Protein, Domain 2"/>
    <property type="match status" value="1"/>
</dbReference>
<dbReference type="Gene3D" id="3.30.70.380">
    <property type="entry name" value="Ferrodoxin-fold anticodon-binding domain"/>
    <property type="match status" value="1"/>
</dbReference>
<dbReference type="Gene3D" id="2.40.50.140">
    <property type="entry name" value="Nucleic acid-binding proteins"/>
    <property type="match status" value="1"/>
</dbReference>
<dbReference type="Gene3D" id="3.50.40.10">
    <property type="entry name" value="Phenylalanyl-trna Synthetase, Chain B, domain 3"/>
    <property type="match status" value="1"/>
</dbReference>
<dbReference type="HAMAP" id="MF_00283">
    <property type="entry name" value="Phe_tRNA_synth_beta1"/>
    <property type="match status" value="1"/>
</dbReference>
<dbReference type="InterPro" id="IPR045864">
    <property type="entry name" value="aa-tRNA-synth_II/BPL/LPL"/>
</dbReference>
<dbReference type="InterPro" id="IPR005146">
    <property type="entry name" value="B3/B4_tRNA-bd"/>
</dbReference>
<dbReference type="InterPro" id="IPR009061">
    <property type="entry name" value="DNA-bd_dom_put_sf"/>
</dbReference>
<dbReference type="InterPro" id="IPR005121">
    <property type="entry name" value="Fdx_antiC-bd"/>
</dbReference>
<dbReference type="InterPro" id="IPR036690">
    <property type="entry name" value="Fdx_antiC-bd_sf"/>
</dbReference>
<dbReference type="InterPro" id="IPR012340">
    <property type="entry name" value="NA-bd_OB-fold"/>
</dbReference>
<dbReference type="InterPro" id="IPR045060">
    <property type="entry name" value="Phe-tRNA-ligase_IIc_bsu"/>
</dbReference>
<dbReference type="InterPro" id="IPR004532">
    <property type="entry name" value="Phe-tRNA-ligase_IIc_bsu_bact"/>
</dbReference>
<dbReference type="InterPro" id="IPR020825">
    <property type="entry name" value="Phe-tRNA_synthase-like_B3/B4"/>
</dbReference>
<dbReference type="InterPro" id="IPR041616">
    <property type="entry name" value="PheRS_beta_core"/>
</dbReference>
<dbReference type="InterPro" id="IPR002547">
    <property type="entry name" value="tRNA-bd_dom"/>
</dbReference>
<dbReference type="InterPro" id="IPR033714">
    <property type="entry name" value="tRNA_bind_bactPheRS"/>
</dbReference>
<dbReference type="InterPro" id="IPR005147">
    <property type="entry name" value="tRNA_synthase_B5-dom"/>
</dbReference>
<dbReference type="NCBIfam" id="TIGR00472">
    <property type="entry name" value="pheT_bact"/>
    <property type="match status" value="1"/>
</dbReference>
<dbReference type="NCBIfam" id="NF045760">
    <property type="entry name" value="YtpR"/>
    <property type="match status" value="1"/>
</dbReference>
<dbReference type="PANTHER" id="PTHR10947:SF0">
    <property type="entry name" value="PHENYLALANINE--TRNA LIGASE BETA SUBUNIT"/>
    <property type="match status" value="1"/>
</dbReference>
<dbReference type="PANTHER" id="PTHR10947">
    <property type="entry name" value="PHENYLALANYL-TRNA SYNTHETASE BETA CHAIN AND LEUCINE-RICH REPEAT-CONTAINING PROTEIN 47"/>
    <property type="match status" value="1"/>
</dbReference>
<dbReference type="Pfam" id="PF03483">
    <property type="entry name" value="B3_4"/>
    <property type="match status" value="1"/>
</dbReference>
<dbReference type="Pfam" id="PF03484">
    <property type="entry name" value="B5"/>
    <property type="match status" value="1"/>
</dbReference>
<dbReference type="Pfam" id="PF03147">
    <property type="entry name" value="FDX-ACB"/>
    <property type="match status" value="1"/>
</dbReference>
<dbReference type="Pfam" id="PF01588">
    <property type="entry name" value="tRNA_bind"/>
    <property type="match status" value="1"/>
</dbReference>
<dbReference type="Pfam" id="PF17759">
    <property type="entry name" value="tRNA_synthFbeta"/>
    <property type="match status" value="1"/>
</dbReference>
<dbReference type="SMART" id="SM00873">
    <property type="entry name" value="B3_4"/>
    <property type="match status" value="1"/>
</dbReference>
<dbReference type="SMART" id="SM00874">
    <property type="entry name" value="B5"/>
    <property type="match status" value="1"/>
</dbReference>
<dbReference type="SMART" id="SM00896">
    <property type="entry name" value="FDX-ACB"/>
    <property type="match status" value="1"/>
</dbReference>
<dbReference type="SUPFAM" id="SSF54991">
    <property type="entry name" value="Anticodon-binding domain of PheRS"/>
    <property type="match status" value="1"/>
</dbReference>
<dbReference type="SUPFAM" id="SSF55681">
    <property type="entry name" value="Class II aaRS and biotin synthetases"/>
    <property type="match status" value="1"/>
</dbReference>
<dbReference type="SUPFAM" id="SSF50249">
    <property type="entry name" value="Nucleic acid-binding proteins"/>
    <property type="match status" value="1"/>
</dbReference>
<dbReference type="SUPFAM" id="SSF56037">
    <property type="entry name" value="PheT/TilS domain"/>
    <property type="match status" value="1"/>
</dbReference>
<dbReference type="SUPFAM" id="SSF46955">
    <property type="entry name" value="Putative DNA-binding domain"/>
    <property type="match status" value="1"/>
</dbReference>
<dbReference type="PROSITE" id="PS51483">
    <property type="entry name" value="B5"/>
    <property type="match status" value="1"/>
</dbReference>
<dbReference type="PROSITE" id="PS51447">
    <property type="entry name" value="FDX_ACB"/>
    <property type="match status" value="1"/>
</dbReference>
<dbReference type="PROSITE" id="PS50886">
    <property type="entry name" value="TRBD"/>
    <property type="match status" value="1"/>
</dbReference>
<sequence length="793" mass="87579">MKFSEAWLRTWVDPDISRETLVERLTLAGLEVESTEPVAAPFKGVKAARIVAVEPHPSAPRLQVCQVDIGSGSLLTVVCGAPNARAGLWAPLAIIGAQLPAGIRIELAKLQGVESFGMLCSAAELGLAEQSAGLLELPEGDFPGVDLHEFLQFDDISIEVDLTPNRSDCLSVAGIAREVGVLTQSPVTEPAIEPVTAQIGDIFPVTVTAPAACPRYLGRVLRGVNPQTQTPWWLRERLRRSGIRSLGLVVDVTNYVMLELGQPMHAFDLERLKGGIQVRYGQADEALTLLDGTHLRLDEETLIIADQQRALALAGIMGGEESGINNQTRHLFLESAFFNPSVIAGRARFYGLHTDSSHRFERGVDPELPRRAMERATALLLEIAGGQAGPVIEVADSSQLPPQATIILRKARIHRVLGVEIAESRITEQLTRLGLKVERIEEGWEVKVPSFRFDLALEVDLIEELGRLYGYDRLPSTRPVGQIQPVLKTEAGAFIDRIRQVLVDRDYQEAITYSFVDQELQQLLDPEGSPLVLNNPISTDMAVMRTTLWTGLVQALQYNSYRQQERIRFFEYGLTFNGQLADLKQERTIAGLISGASYPEQWGLVGRPADFFDLKGDVEAILSLVGEQRNCFEFMAASHPALHPGQSAQILREGQAVGWLGALHPWLESKLDLSSRAYLFSLQLEAVERGSLPVFQSLSKFPAIRRDIAFLVNANIPVQVVFDCLKGCESDILKEFQLFDVYTGKGIDPDKKSLALKLILQHPSYTLTDDRVNIFIERVMALLVTELGAIIRE</sequence>
<feature type="chain" id="PRO_0000232069" description="Phenylalanine--tRNA ligase beta subunit">
    <location>
        <begin position="1"/>
        <end position="793"/>
    </location>
</feature>
<feature type="domain" description="tRNA-binding" evidence="1">
    <location>
        <begin position="39"/>
        <end position="148"/>
    </location>
</feature>
<feature type="domain" description="B5" evidence="1">
    <location>
        <begin position="401"/>
        <end position="476"/>
    </location>
</feature>
<feature type="domain" description="FDX-ACB" evidence="1">
    <location>
        <begin position="699"/>
        <end position="792"/>
    </location>
</feature>
<feature type="binding site" evidence="1">
    <location>
        <position position="454"/>
    </location>
    <ligand>
        <name>Mg(2+)</name>
        <dbReference type="ChEBI" id="CHEBI:18420"/>
        <note>shared with alpha subunit</note>
    </ligand>
</feature>
<feature type="binding site" evidence="1">
    <location>
        <position position="460"/>
    </location>
    <ligand>
        <name>Mg(2+)</name>
        <dbReference type="ChEBI" id="CHEBI:18420"/>
        <note>shared with alpha subunit</note>
    </ligand>
</feature>
<feature type="binding site" evidence="1">
    <location>
        <position position="463"/>
    </location>
    <ligand>
        <name>Mg(2+)</name>
        <dbReference type="ChEBI" id="CHEBI:18420"/>
        <note>shared with alpha subunit</note>
    </ligand>
</feature>
<feature type="binding site" evidence="1">
    <location>
        <position position="464"/>
    </location>
    <ligand>
        <name>Mg(2+)</name>
        <dbReference type="ChEBI" id="CHEBI:18420"/>
        <note>shared with alpha subunit</note>
    </ligand>
</feature>
<reference key="1">
    <citation type="journal article" date="2006" name="Appl. Environ. Microbiol.">
        <title>Complete genome sequence of the marine, chemolithoautotrophic, ammonia-oxidizing bacterium Nitrosococcus oceani ATCC 19707.</title>
        <authorList>
            <person name="Klotz M.G."/>
            <person name="Arp D.J."/>
            <person name="Chain P.S.G."/>
            <person name="El-Sheikh A.F."/>
            <person name="Hauser L.J."/>
            <person name="Hommes N.G."/>
            <person name="Larimer F.W."/>
            <person name="Malfatti S.A."/>
            <person name="Norton J.M."/>
            <person name="Poret-Peterson A.T."/>
            <person name="Vergez L.M."/>
            <person name="Ward B.B."/>
        </authorList>
    </citation>
    <scope>NUCLEOTIDE SEQUENCE [LARGE SCALE GENOMIC DNA]</scope>
    <source>
        <strain>ATCC 19707 / BCRC 17464 / JCM 30415 / NCIMB 11848 / C-107</strain>
    </source>
</reference>
<comment type="catalytic activity">
    <reaction evidence="1">
        <text>tRNA(Phe) + L-phenylalanine + ATP = L-phenylalanyl-tRNA(Phe) + AMP + diphosphate + H(+)</text>
        <dbReference type="Rhea" id="RHEA:19413"/>
        <dbReference type="Rhea" id="RHEA-COMP:9668"/>
        <dbReference type="Rhea" id="RHEA-COMP:9699"/>
        <dbReference type="ChEBI" id="CHEBI:15378"/>
        <dbReference type="ChEBI" id="CHEBI:30616"/>
        <dbReference type="ChEBI" id="CHEBI:33019"/>
        <dbReference type="ChEBI" id="CHEBI:58095"/>
        <dbReference type="ChEBI" id="CHEBI:78442"/>
        <dbReference type="ChEBI" id="CHEBI:78531"/>
        <dbReference type="ChEBI" id="CHEBI:456215"/>
        <dbReference type="EC" id="6.1.1.20"/>
    </reaction>
</comment>
<comment type="cofactor">
    <cofactor evidence="1">
        <name>Mg(2+)</name>
        <dbReference type="ChEBI" id="CHEBI:18420"/>
    </cofactor>
    <text evidence="1">Binds 2 magnesium ions per tetramer.</text>
</comment>
<comment type="subunit">
    <text evidence="1">Tetramer of two alpha and two beta subunits.</text>
</comment>
<comment type="subcellular location">
    <subcellularLocation>
        <location evidence="1">Cytoplasm</location>
    </subcellularLocation>
</comment>
<comment type="similarity">
    <text evidence="1">Belongs to the phenylalanyl-tRNA synthetase beta subunit family. Type 1 subfamily.</text>
</comment>
<proteinExistence type="inferred from homology"/>